<name>MDS_AGADC</name>
<keyword id="KW-0027">Amidation</keyword>
<keyword id="KW-0878">Amphibian defense peptide</keyword>
<keyword id="KW-0044">Antibiotic</keyword>
<keyword id="KW-0929">Antimicrobial</keyword>
<keyword id="KW-0165">Cleavage on pair of basic residues</keyword>
<keyword id="KW-0903">Direct protein sequencing</keyword>
<keyword id="KW-0295">Fungicide</keyword>
<keyword id="KW-0391">Immunity</keyword>
<keyword id="KW-0399">Innate immunity</keyword>
<keyword id="KW-0964">Secreted</keyword>
<keyword id="KW-0732">Signal</keyword>
<dbReference type="EMBL" id="HE863818">
    <property type="protein sequence ID" value="CCI79381.1"/>
    <property type="molecule type" value="mRNA"/>
</dbReference>
<dbReference type="GO" id="GO:0005576">
    <property type="term" value="C:extracellular region"/>
    <property type="evidence" value="ECO:0007669"/>
    <property type="project" value="UniProtKB-SubCell"/>
</dbReference>
<dbReference type="GO" id="GO:0042742">
    <property type="term" value="P:defense response to bacterium"/>
    <property type="evidence" value="ECO:0007669"/>
    <property type="project" value="UniProtKB-KW"/>
</dbReference>
<dbReference type="GO" id="GO:0050832">
    <property type="term" value="P:defense response to fungus"/>
    <property type="evidence" value="ECO:0007669"/>
    <property type="project" value="UniProtKB-KW"/>
</dbReference>
<dbReference type="GO" id="GO:0045087">
    <property type="term" value="P:innate immune response"/>
    <property type="evidence" value="ECO:0007669"/>
    <property type="project" value="UniProtKB-KW"/>
</dbReference>
<dbReference type="GO" id="GO:0031640">
    <property type="term" value="P:killing of cells of another organism"/>
    <property type="evidence" value="ECO:0007669"/>
    <property type="project" value="UniProtKB-KW"/>
</dbReference>
<dbReference type="InterPro" id="IPR004275">
    <property type="entry name" value="Frog_antimicrobial_propeptide"/>
</dbReference>
<dbReference type="Pfam" id="PF03032">
    <property type="entry name" value="FSAP_sig_propep"/>
    <property type="match status" value="1"/>
</dbReference>
<evidence type="ECO:0000255" key="1"/>
<evidence type="ECO:0000256" key="2">
    <source>
        <dbReference type="SAM" id="MobiDB-lite"/>
    </source>
</evidence>
<evidence type="ECO:0000269" key="3">
    <source>
    </source>
</evidence>
<evidence type="ECO:0000303" key="4">
    <source>
    </source>
</evidence>
<evidence type="ECO:0000305" key="5"/>
<evidence type="ECO:0000305" key="6">
    <source>
    </source>
</evidence>
<evidence type="ECO:0000312" key="7">
    <source>
        <dbReference type="EMBL" id="CCI79381.1"/>
    </source>
</evidence>
<protein>
    <recommendedName>
        <fullName evidence="5">Medusin-DA1</fullName>
        <shortName evidence="5">MDS-DA1</shortName>
    </recommendedName>
    <alternativeName>
        <fullName evidence="4">Medusin-PD</fullName>
    </alternativeName>
    <alternativeName>
        <fullName evidence="7">Phyllin-PD</fullName>
    </alternativeName>
</protein>
<proteinExistence type="evidence at protein level"/>
<feature type="signal peptide" evidence="1">
    <location>
        <begin position="1"/>
        <end position="22"/>
    </location>
</feature>
<feature type="propeptide" id="PRO_0000449599" evidence="6">
    <location>
        <begin position="23"/>
        <end position="48"/>
    </location>
</feature>
<feature type="peptide" id="PRO_5003947328" description="Medusin-DA1" evidence="3">
    <location>
        <begin position="50"/>
        <end position="67"/>
    </location>
</feature>
<feature type="region of interest" description="Disordered" evidence="2">
    <location>
        <begin position="25"/>
        <end position="47"/>
    </location>
</feature>
<feature type="compositionally biased region" description="Acidic residues" evidence="2">
    <location>
        <begin position="31"/>
        <end position="41"/>
    </location>
</feature>
<feature type="modified residue" description="Leucine amide" evidence="3">
    <location>
        <position position="67"/>
    </location>
</feature>
<comment type="function">
    <text evidence="3">Antimicrobial peptide with activity against Gram-positive bacteria (S.aureus, MIC=32 mg/L) and fungi (C.albicans, MIC=64 mg/L) (PubMed:23415652). Shows weak hemolytic activity (PubMed:23415652).</text>
</comment>
<comment type="subcellular location">
    <subcellularLocation>
        <location evidence="3">Secreted</location>
    </subcellularLocation>
</comment>
<comment type="tissue specificity">
    <text evidence="6">Expressed by the skin glands.</text>
</comment>
<comment type="similarity">
    <text evidence="1">Belongs to the frog skin active peptide (FSAP) family. Medusin subfamily.</text>
</comment>
<comment type="online information" name="The antimicrobial peptide database">
    <link uri="https://wangapd3.com/database/query_output.php?ID=02177"/>
</comment>
<organism>
    <name type="scientific">Agalychnis dacnicolor</name>
    <name type="common">Giant Mexican leaf frog</name>
    <name type="synonym">Pachymedusa dacnicolor</name>
    <dbReference type="NCBI Taxonomy" id="75988"/>
    <lineage>
        <taxon>Eukaryota</taxon>
        <taxon>Metazoa</taxon>
        <taxon>Chordata</taxon>
        <taxon>Craniata</taxon>
        <taxon>Vertebrata</taxon>
        <taxon>Euteleostomi</taxon>
        <taxon>Amphibia</taxon>
        <taxon>Batrachia</taxon>
        <taxon>Anura</taxon>
        <taxon>Neobatrachia</taxon>
        <taxon>Hyloidea</taxon>
        <taxon>Hylidae</taxon>
        <taxon>Phyllomedusinae</taxon>
        <taxon>Agalychnis</taxon>
    </lineage>
</organism>
<reference key="1">
    <citation type="journal article" date="2013" name="Biochimie">
        <title>Medusins: a new class of antimicrobial peptides from the skin secretions of phyllomedusine frogs.</title>
        <authorList>
            <person name="Xi X."/>
            <person name="Li R."/>
            <person name="Jiang Y."/>
            <person name="Lin Y."/>
            <person name="Wu Y."/>
            <person name="Zhou M."/>
            <person name="Xu J."/>
            <person name="Wang L."/>
            <person name="Chen T."/>
            <person name="Shaw C."/>
        </authorList>
    </citation>
    <scope>NUCLEOTIDE SEQUENCE [MRNA]</scope>
    <scope>PROTEIN SEQUENCE OF 50-67</scope>
    <scope>FUNCTION</scope>
    <scope>AMIDATION AT LEU-67</scope>
    <scope>SUBCELLULAR LOCATION</scope>
    <scope>SYNTHESIS OF 50-67</scope>
    <source>
        <tissue>Skin secretion</tissue>
    </source>
</reference>
<sequence>MAFLKKSLFLVLFLGLVSLSVCEEEKRENEEEKNEQEEDDREERNEEKRLLGMIPLAISAISSLSKLG</sequence>
<accession>L0P3K3</accession>